<dbReference type="EC" id="7.1.1.-" evidence="1"/>
<dbReference type="EMBL" id="AP008231">
    <property type="protein sequence ID" value="BAD78330.1"/>
    <property type="molecule type" value="Genomic_DNA"/>
</dbReference>
<dbReference type="RefSeq" id="WP_011242454.1">
    <property type="nucleotide sequence ID" value="NZ_CP085785.1"/>
</dbReference>
<dbReference type="SMR" id="Q5N5T8"/>
<dbReference type="KEGG" id="syc:syc0140_d"/>
<dbReference type="eggNOG" id="COG1007">
    <property type="taxonomic scope" value="Bacteria"/>
</dbReference>
<dbReference type="Proteomes" id="UP000001175">
    <property type="component" value="Chromosome"/>
</dbReference>
<dbReference type="GO" id="GO:0031676">
    <property type="term" value="C:plasma membrane-derived thylakoid membrane"/>
    <property type="evidence" value="ECO:0007669"/>
    <property type="project" value="UniProtKB-SubCell"/>
</dbReference>
<dbReference type="GO" id="GO:0008137">
    <property type="term" value="F:NADH dehydrogenase (ubiquinone) activity"/>
    <property type="evidence" value="ECO:0007669"/>
    <property type="project" value="InterPro"/>
</dbReference>
<dbReference type="GO" id="GO:0048038">
    <property type="term" value="F:quinone binding"/>
    <property type="evidence" value="ECO:0007669"/>
    <property type="project" value="UniProtKB-KW"/>
</dbReference>
<dbReference type="GO" id="GO:0042773">
    <property type="term" value="P:ATP synthesis coupled electron transport"/>
    <property type="evidence" value="ECO:0007669"/>
    <property type="project" value="InterPro"/>
</dbReference>
<dbReference type="GO" id="GO:0019684">
    <property type="term" value="P:photosynthesis, light reaction"/>
    <property type="evidence" value="ECO:0007669"/>
    <property type="project" value="UniProtKB-UniRule"/>
</dbReference>
<dbReference type="HAMAP" id="MF_00445">
    <property type="entry name" value="NDH1_NuoN_1"/>
    <property type="match status" value="1"/>
</dbReference>
<dbReference type="InterPro" id="IPR010096">
    <property type="entry name" value="NADH-Q_OxRdtase_suN/2"/>
</dbReference>
<dbReference type="InterPro" id="IPR001750">
    <property type="entry name" value="ND/Mrp_TM"/>
</dbReference>
<dbReference type="InterPro" id="IPR045693">
    <property type="entry name" value="Ndh2_N"/>
</dbReference>
<dbReference type="NCBIfam" id="TIGR01770">
    <property type="entry name" value="NDH_I_N"/>
    <property type="match status" value="1"/>
</dbReference>
<dbReference type="NCBIfam" id="NF002701">
    <property type="entry name" value="PRK02504.1"/>
    <property type="match status" value="1"/>
</dbReference>
<dbReference type="PANTHER" id="PTHR22773">
    <property type="entry name" value="NADH DEHYDROGENASE"/>
    <property type="match status" value="1"/>
</dbReference>
<dbReference type="Pfam" id="PF19530">
    <property type="entry name" value="Ndh2_N"/>
    <property type="match status" value="1"/>
</dbReference>
<dbReference type="Pfam" id="PF00361">
    <property type="entry name" value="Proton_antipo_M"/>
    <property type="match status" value="1"/>
</dbReference>
<dbReference type="PRINTS" id="PR01434">
    <property type="entry name" value="NADHDHGNASE5"/>
</dbReference>
<feature type="chain" id="PRO_0000225360" description="NAD(P)H-quinone oxidoreductase subunit 2">
    <location>
        <begin position="1"/>
        <end position="521"/>
    </location>
</feature>
<feature type="transmembrane region" description="Helical" evidence="1">
    <location>
        <begin position="14"/>
        <end position="34"/>
    </location>
</feature>
<feature type="transmembrane region" description="Helical" evidence="1">
    <location>
        <begin position="42"/>
        <end position="62"/>
    </location>
</feature>
<feature type="transmembrane region" description="Helical" evidence="1">
    <location>
        <begin position="79"/>
        <end position="99"/>
    </location>
</feature>
<feature type="transmembrane region" description="Helical" evidence="1">
    <location>
        <begin position="109"/>
        <end position="129"/>
    </location>
</feature>
<feature type="transmembrane region" description="Helical" evidence="1">
    <location>
        <begin position="132"/>
        <end position="152"/>
    </location>
</feature>
<feature type="transmembrane region" description="Helical" evidence="1">
    <location>
        <begin position="167"/>
        <end position="187"/>
    </location>
</feature>
<feature type="transmembrane region" description="Helical" evidence="1">
    <location>
        <begin position="207"/>
        <end position="227"/>
    </location>
</feature>
<feature type="transmembrane region" description="Helical" evidence="1">
    <location>
        <begin position="241"/>
        <end position="261"/>
    </location>
</feature>
<feature type="transmembrane region" description="Helical" evidence="1">
    <location>
        <begin position="275"/>
        <end position="295"/>
    </location>
</feature>
<feature type="transmembrane region" description="Helical" evidence="1">
    <location>
        <begin position="303"/>
        <end position="323"/>
    </location>
</feature>
<feature type="transmembrane region" description="Helical" evidence="1">
    <location>
        <begin position="331"/>
        <end position="351"/>
    </location>
</feature>
<feature type="transmembrane region" description="Helical" evidence="1">
    <location>
        <begin position="375"/>
        <end position="395"/>
    </location>
</feature>
<feature type="transmembrane region" description="Helical" evidence="1">
    <location>
        <begin position="397"/>
        <end position="417"/>
    </location>
</feature>
<feature type="transmembrane region" description="Helical" evidence="1">
    <location>
        <begin position="463"/>
        <end position="483"/>
    </location>
</feature>
<gene>
    <name evidence="1" type="primary">ndhB</name>
    <name type="ordered locus">syc0140_d</name>
</gene>
<reference key="1">
    <citation type="journal article" date="2007" name="Photosyn. Res.">
        <title>Complete nucleotide sequence of the freshwater unicellular cyanobacterium Synechococcus elongatus PCC 6301 chromosome: gene content and organization.</title>
        <authorList>
            <person name="Sugita C."/>
            <person name="Ogata K."/>
            <person name="Shikata M."/>
            <person name="Jikuya H."/>
            <person name="Takano J."/>
            <person name="Furumichi M."/>
            <person name="Kanehisa M."/>
            <person name="Omata T."/>
            <person name="Sugiura M."/>
            <person name="Sugita M."/>
        </authorList>
    </citation>
    <scope>NUCLEOTIDE SEQUENCE [LARGE SCALE GENOMIC DNA]</scope>
    <source>
        <strain>ATCC 27144 / PCC 6301 / SAUG 1402/1</strain>
    </source>
</reference>
<evidence type="ECO:0000255" key="1">
    <source>
        <dbReference type="HAMAP-Rule" id="MF_00445"/>
    </source>
</evidence>
<protein>
    <recommendedName>
        <fullName evidence="1">NAD(P)H-quinone oxidoreductase subunit 2</fullName>
        <ecNumber evidence="1">7.1.1.-</ecNumber>
    </recommendedName>
    <alternativeName>
        <fullName evidence="1">NAD(P)H dehydrogenase subunit 2</fullName>
    </alternativeName>
    <alternativeName>
        <fullName evidence="1">NADH-plastoquinone oxidoreductase subunit 2</fullName>
    </alternativeName>
    <alternativeName>
        <fullName evidence="1">NDH-1, subunit 2</fullName>
    </alternativeName>
</protein>
<keyword id="KW-0472">Membrane</keyword>
<keyword id="KW-0520">NAD</keyword>
<keyword id="KW-0521">NADP</keyword>
<keyword id="KW-0618">Plastoquinone</keyword>
<keyword id="KW-0874">Quinone</keyword>
<keyword id="KW-0793">Thylakoid</keyword>
<keyword id="KW-1278">Translocase</keyword>
<keyword id="KW-0812">Transmembrane</keyword>
<keyword id="KW-1133">Transmembrane helix</keyword>
<keyword id="KW-0813">Transport</keyword>
<organism>
    <name type="scientific">Synechococcus sp. (strain ATCC 27144 / PCC 6301 / SAUG 1402/1)</name>
    <name type="common">Anacystis nidulans</name>
    <dbReference type="NCBI Taxonomy" id="269084"/>
    <lineage>
        <taxon>Bacteria</taxon>
        <taxon>Bacillati</taxon>
        <taxon>Cyanobacteriota</taxon>
        <taxon>Cyanophyceae</taxon>
        <taxon>Synechococcales</taxon>
        <taxon>Synechococcaceae</taxon>
        <taxon>Synechococcus</taxon>
    </lineage>
</organism>
<name>NU2C_SYNP6</name>
<accession>Q5N5T8</accession>
<sequence length="521" mass="55070">MDFLTLAGQLNAGVILPEGIVIVTLLTVLVTDLILGRQSLRLTPALAITGLSAAIAVLTLQWNTSQNLAFLGGFNGDNLSIVFRGIVLLSAAVTILLSIRYVEQSGTSLGEFITILLTASLGGMFLSGANELVTIFVSLETLSISSYLLTGYMKRDPRSNEAALKYLLIGAASSAIFLYGVSLLYGLAGGETQLPAIAEKLGEAQPLALLISLIFVIAGIAFKISAVPFHQWTPDVYEGSPTPIVAFLSVGSKAAGFALAIRLLVTAYPALTEQWHFVFTALAILSLVLGNVVALAQTSMKRLLAYSSIAQAGFVMIGLIAGTEAGYSSMVYYLLIYLFMNLGGFACVILFSLRTGTDQISEYAGLYQKDPLVTLGLSLCLLSLGGIPPLAGFFGKLYLFWAGWQAGLYGLVLLALITSVISIYYYIRVIKMMVVKEPQEMSESVRNYPETNWNLPGMQPLRAGLVVCVIATAVAGILSNPLFNLASASVSGSSFLGLAPAAEVVTTTATPVALSEPPAAS</sequence>
<comment type="function">
    <text evidence="1">NDH-1 shuttles electrons from an unknown electron donor, via FMN and iron-sulfur (Fe-S) centers, to quinones in the respiratory and/or the photosynthetic chain. The immediate electron acceptor for the enzyme in this species is believed to be plastoquinone. Couples the redox reaction to proton translocation, and thus conserves the redox energy in a proton gradient. Cyanobacterial NDH-1 also plays a role in inorganic carbon-concentration.</text>
</comment>
<comment type="catalytic activity">
    <reaction evidence="1">
        <text>a plastoquinone + NADH + (n+1) H(+)(in) = a plastoquinol + NAD(+) + n H(+)(out)</text>
        <dbReference type="Rhea" id="RHEA:42608"/>
        <dbReference type="Rhea" id="RHEA-COMP:9561"/>
        <dbReference type="Rhea" id="RHEA-COMP:9562"/>
        <dbReference type="ChEBI" id="CHEBI:15378"/>
        <dbReference type="ChEBI" id="CHEBI:17757"/>
        <dbReference type="ChEBI" id="CHEBI:57540"/>
        <dbReference type="ChEBI" id="CHEBI:57945"/>
        <dbReference type="ChEBI" id="CHEBI:62192"/>
    </reaction>
</comment>
<comment type="catalytic activity">
    <reaction evidence="1">
        <text>a plastoquinone + NADPH + (n+1) H(+)(in) = a plastoquinol + NADP(+) + n H(+)(out)</text>
        <dbReference type="Rhea" id="RHEA:42612"/>
        <dbReference type="Rhea" id="RHEA-COMP:9561"/>
        <dbReference type="Rhea" id="RHEA-COMP:9562"/>
        <dbReference type="ChEBI" id="CHEBI:15378"/>
        <dbReference type="ChEBI" id="CHEBI:17757"/>
        <dbReference type="ChEBI" id="CHEBI:57783"/>
        <dbReference type="ChEBI" id="CHEBI:58349"/>
        <dbReference type="ChEBI" id="CHEBI:62192"/>
    </reaction>
</comment>
<comment type="subunit">
    <text evidence="1">NDH-1 can be composed of about 15 different subunits; different subcomplexes with different compositions have been identified which probably have different functions.</text>
</comment>
<comment type="subcellular location">
    <subcellularLocation>
        <location evidence="1">Cellular thylakoid membrane</location>
        <topology evidence="1">Multi-pass membrane protein</topology>
    </subcellularLocation>
</comment>
<comment type="similarity">
    <text evidence="1">Belongs to the complex I subunit 2 family.</text>
</comment>
<proteinExistence type="inferred from homology"/>